<keyword id="KW-0125">Carotenoid biosynthesis</keyword>
<keyword id="KW-0560">Oxidoreductase</keyword>
<reference key="1">
    <citation type="journal article" date="1990" name="J. Bacteriol.">
        <title>Elucidation of the Erwinia uredovora carotenoid biosynthetic pathway by functional analysis of gene products expressed in Escherichia coli.</title>
        <authorList>
            <person name="Misawa N."/>
            <person name="Nakagawa M."/>
            <person name="Kobayashi K."/>
            <person name="Yamano S."/>
            <person name="Izawa Y."/>
            <person name="Nakamura K."/>
            <person name="Harashima K."/>
        </authorList>
    </citation>
    <scope>NUCLEOTIDE SEQUENCE [GENOMIC DNA]</scope>
    <source>
        <strain>ATCC 19321 / DSM 30080 / NCPPB 800 / NRRL B-14773 / 20D3</strain>
    </source>
</reference>
<feature type="chain" id="PRO_0000079379" description="Beta-carotene hydroxylase">
    <location>
        <begin position="1"/>
        <end position="175"/>
    </location>
</feature>
<feature type="domain" description="Fatty acid hydroxylase" evidence="2">
    <location>
        <begin position="11"/>
        <end position="136"/>
    </location>
</feature>
<evidence type="ECO:0000250" key="1">
    <source>
        <dbReference type="UniProtKB" id="Q9SZZ8"/>
    </source>
</evidence>
<evidence type="ECO:0000255" key="2"/>
<evidence type="ECO:0000305" key="3"/>
<sequence>MLWIWNALIVFVTVIGMEVIAALAHKYIMHGWGWGWHLSHHEPRKGAFEVNDLYAVVFAALSILLIYLGSTGMWPLQWIGAGMTAYGLLYFMVHDGLVHQRWPFRYIPRKGYLKRLYMAHRMHHAVRGKEGCVSFGFLYAPPLSKLQATLRERHGARAGAARDAQGGEDEPASGK</sequence>
<dbReference type="EC" id="1.14.15.24" evidence="1"/>
<dbReference type="EMBL" id="D90087">
    <property type="protein sequence ID" value="BAA14129.1"/>
    <property type="molecule type" value="Genomic_DNA"/>
</dbReference>
<dbReference type="PIR" id="F37802">
    <property type="entry name" value="F37802"/>
</dbReference>
<dbReference type="BioCyc" id="MetaCyc:MONOMER-14937"/>
<dbReference type="BRENDA" id="1.14.15.24">
    <property type="organism ID" value="2137"/>
</dbReference>
<dbReference type="UniPathway" id="UPA00843"/>
<dbReference type="GO" id="GO:0010291">
    <property type="term" value="F:beta-carotene 3-hydroxylase activity"/>
    <property type="evidence" value="ECO:0007669"/>
    <property type="project" value="UniProtKB-EC"/>
</dbReference>
<dbReference type="GO" id="GO:0005506">
    <property type="term" value="F:iron ion binding"/>
    <property type="evidence" value="ECO:0007669"/>
    <property type="project" value="InterPro"/>
</dbReference>
<dbReference type="GO" id="GO:0016119">
    <property type="term" value="P:carotene metabolic process"/>
    <property type="evidence" value="ECO:0007669"/>
    <property type="project" value="TreeGrafter"/>
</dbReference>
<dbReference type="GO" id="GO:0016123">
    <property type="term" value="P:xanthophyll biosynthetic process"/>
    <property type="evidence" value="ECO:0007669"/>
    <property type="project" value="TreeGrafter"/>
</dbReference>
<dbReference type="InterPro" id="IPR045019">
    <property type="entry name" value="BETA-OHASE-like"/>
</dbReference>
<dbReference type="InterPro" id="IPR006694">
    <property type="entry name" value="Fatty_acid_hydroxylase"/>
</dbReference>
<dbReference type="PANTHER" id="PTHR31899">
    <property type="entry name" value="BETA-CAROTENE 3-HYDROXYLASE 1, CHLOROPLASTIC"/>
    <property type="match status" value="1"/>
</dbReference>
<dbReference type="PANTHER" id="PTHR31899:SF9">
    <property type="entry name" value="BETA-CAROTENE 3-HYDROXYLASE 1, CHLOROPLASTIC"/>
    <property type="match status" value="1"/>
</dbReference>
<dbReference type="Pfam" id="PF04116">
    <property type="entry name" value="FA_hydroxylase"/>
    <property type="match status" value="1"/>
</dbReference>
<organism>
    <name type="scientific">Pantoea ananas</name>
    <name type="common">Erwinia uredovora</name>
    <dbReference type="NCBI Taxonomy" id="553"/>
    <lineage>
        <taxon>Bacteria</taxon>
        <taxon>Pseudomonadati</taxon>
        <taxon>Pseudomonadota</taxon>
        <taxon>Gammaproteobacteria</taxon>
        <taxon>Enterobacterales</taxon>
        <taxon>Erwiniaceae</taxon>
        <taxon>Pantoea</taxon>
    </lineage>
</organism>
<proteinExistence type="inferred from homology"/>
<comment type="function">
    <text>Catalyzes the hydroxylation reaction from beta-carotene to zeaxanthin.</text>
</comment>
<comment type="catalytic activity">
    <reaction evidence="1">
        <text>all-trans-beta-carotene + 4 reduced [2Fe-2S]-[ferredoxin] + 2 O2 + 4 H(+) = all-trans-zeaxanthin + 4 oxidized [2Fe-2S]-[ferredoxin] + 2 H2O</text>
        <dbReference type="Rhea" id="RHEA:30331"/>
        <dbReference type="Rhea" id="RHEA-COMP:10000"/>
        <dbReference type="Rhea" id="RHEA-COMP:10001"/>
        <dbReference type="ChEBI" id="CHEBI:15377"/>
        <dbReference type="ChEBI" id="CHEBI:15378"/>
        <dbReference type="ChEBI" id="CHEBI:15379"/>
        <dbReference type="ChEBI" id="CHEBI:17579"/>
        <dbReference type="ChEBI" id="CHEBI:27547"/>
        <dbReference type="ChEBI" id="CHEBI:33737"/>
        <dbReference type="ChEBI" id="CHEBI:33738"/>
        <dbReference type="EC" id="1.14.15.24"/>
    </reaction>
</comment>
<comment type="pathway">
    <text>Carotenoid biosynthesis; zeaxanthin biosynthesis.</text>
</comment>
<comment type="similarity">
    <text evidence="3">Belongs to the sterol desaturase family.</text>
</comment>
<name>CRTZ_PANAN</name>
<protein>
    <recommendedName>
        <fullName>Beta-carotene hydroxylase</fullName>
        <ecNumber evidence="1">1.14.15.24</ecNumber>
    </recommendedName>
</protein>
<accession>P21688</accession>
<gene>
    <name type="primary">crtZ</name>
</gene>